<accession>O49608</accession>
<accession>Q9SAM5</accession>
<accession>Q9SBG2</accession>
<accession>Q9SM28</accession>
<reference key="1">
    <citation type="online journal article" date="1999" name="Plant Gene Register">
        <title>Cloning of three MYB-like genes from Arabidopsis thaliana.</title>
        <authorList>
            <person name="Li S.F."/>
            <person name="Heazlewood J."/>
            <person name="Parish R.W."/>
        </authorList>
        <locator>PGR99-138</locator>
    </citation>
    <scope>NUCLEOTIDE SEQUENCE [GENOMIC DNA]</scope>
    <source>
        <strain>cv. Landsberg erecta</strain>
    </source>
</reference>
<reference key="2">
    <citation type="submission" date="2004-01" db="EMBL/GenBank/DDBJ databases">
        <title>The MYB transcription factor family in Arabidopsis: a genome-wide cloning and expression pattern analysis.</title>
        <authorList>
            <person name="Qu L.-J."/>
            <person name="Gu H."/>
        </authorList>
    </citation>
    <scope>NUCLEOTIDE SEQUENCE [MRNA]</scope>
</reference>
<reference key="3">
    <citation type="journal article" date="1999" name="Nature">
        <title>Sequence and analysis of chromosome 4 of the plant Arabidopsis thaliana.</title>
        <authorList>
            <person name="Mayer K.F.X."/>
            <person name="Schueller C."/>
            <person name="Wambutt R."/>
            <person name="Murphy G."/>
            <person name="Volckaert G."/>
            <person name="Pohl T."/>
            <person name="Duesterhoeft A."/>
            <person name="Stiekema W."/>
            <person name="Entian K.-D."/>
            <person name="Terryn N."/>
            <person name="Harris B."/>
            <person name="Ansorge W."/>
            <person name="Brandt P."/>
            <person name="Grivell L.A."/>
            <person name="Rieger M."/>
            <person name="Weichselgartner M."/>
            <person name="de Simone V."/>
            <person name="Obermaier B."/>
            <person name="Mache R."/>
            <person name="Mueller M."/>
            <person name="Kreis M."/>
            <person name="Delseny M."/>
            <person name="Puigdomenech P."/>
            <person name="Watson M."/>
            <person name="Schmidtheini T."/>
            <person name="Reichert B."/>
            <person name="Portetelle D."/>
            <person name="Perez-Alonso M."/>
            <person name="Boutry M."/>
            <person name="Bancroft I."/>
            <person name="Vos P."/>
            <person name="Hoheisel J."/>
            <person name="Zimmermann W."/>
            <person name="Wedler H."/>
            <person name="Ridley P."/>
            <person name="Langham S.-A."/>
            <person name="McCullagh B."/>
            <person name="Bilham L."/>
            <person name="Robben J."/>
            <person name="van der Schueren J."/>
            <person name="Grymonprez B."/>
            <person name="Chuang Y.-J."/>
            <person name="Vandenbussche F."/>
            <person name="Braeken M."/>
            <person name="Weltjens I."/>
            <person name="Voet M."/>
            <person name="Bastiaens I."/>
            <person name="Aert R."/>
            <person name="Defoor E."/>
            <person name="Weitzenegger T."/>
            <person name="Bothe G."/>
            <person name="Ramsperger U."/>
            <person name="Hilbert H."/>
            <person name="Braun M."/>
            <person name="Holzer E."/>
            <person name="Brandt A."/>
            <person name="Peters S."/>
            <person name="van Staveren M."/>
            <person name="Dirkse W."/>
            <person name="Mooijman P."/>
            <person name="Klein Lankhorst R."/>
            <person name="Rose M."/>
            <person name="Hauf J."/>
            <person name="Koetter P."/>
            <person name="Berneiser S."/>
            <person name="Hempel S."/>
            <person name="Feldpausch M."/>
            <person name="Lamberth S."/>
            <person name="Van den Daele H."/>
            <person name="De Keyser A."/>
            <person name="Buysshaert C."/>
            <person name="Gielen J."/>
            <person name="Villarroel R."/>
            <person name="De Clercq R."/>
            <person name="van Montagu M."/>
            <person name="Rogers J."/>
            <person name="Cronin A."/>
            <person name="Quail M.A."/>
            <person name="Bray-Allen S."/>
            <person name="Clark L."/>
            <person name="Doggett J."/>
            <person name="Hall S."/>
            <person name="Kay M."/>
            <person name="Lennard N."/>
            <person name="McLay K."/>
            <person name="Mayes R."/>
            <person name="Pettett A."/>
            <person name="Rajandream M.A."/>
            <person name="Lyne M."/>
            <person name="Benes V."/>
            <person name="Rechmann S."/>
            <person name="Borkova D."/>
            <person name="Bloecker H."/>
            <person name="Scharfe M."/>
            <person name="Grimm M."/>
            <person name="Loehnert T.-H."/>
            <person name="Dose S."/>
            <person name="de Haan M."/>
            <person name="Maarse A.C."/>
            <person name="Schaefer M."/>
            <person name="Mueller-Auer S."/>
            <person name="Gabel C."/>
            <person name="Fuchs M."/>
            <person name="Fartmann B."/>
            <person name="Granderath K."/>
            <person name="Dauner D."/>
            <person name="Herzl A."/>
            <person name="Neumann S."/>
            <person name="Argiriou A."/>
            <person name="Vitale D."/>
            <person name="Liguori R."/>
            <person name="Piravandi E."/>
            <person name="Massenet O."/>
            <person name="Quigley F."/>
            <person name="Clabauld G."/>
            <person name="Muendlein A."/>
            <person name="Felber R."/>
            <person name="Schnabl S."/>
            <person name="Hiller R."/>
            <person name="Schmidt W."/>
            <person name="Lecharny A."/>
            <person name="Aubourg S."/>
            <person name="Chefdor F."/>
            <person name="Cooke R."/>
            <person name="Berger C."/>
            <person name="Monfort A."/>
            <person name="Casacuberta E."/>
            <person name="Gibbons T."/>
            <person name="Weber N."/>
            <person name="Vandenbol M."/>
            <person name="Bargues M."/>
            <person name="Terol J."/>
            <person name="Torres A."/>
            <person name="Perez-Perez A."/>
            <person name="Purnelle B."/>
            <person name="Bent E."/>
            <person name="Johnson S."/>
            <person name="Tacon D."/>
            <person name="Jesse T."/>
            <person name="Heijnen L."/>
            <person name="Schwarz S."/>
            <person name="Scholler P."/>
            <person name="Heber S."/>
            <person name="Francs P."/>
            <person name="Bielke C."/>
            <person name="Frishman D."/>
            <person name="Haase D."/>
            <person name="Lemcke K."/>
            <person name="Mewes H.-W."/>
            <person name="Stocker S."/>
            <person name="Zaccaria P."/>
            <person name="Bevan M."/>
            <person name="Wilson R.K."/>
            <person name="de la Bastide M."/>
            <person name="Habermann K."/>
            <person name="Parnell L."/>
            <person name="Dedhia N."/>
            <person name="Gnoj L."/>
            <person name="Schutz K."/>
            <person name="Huang E."/>
            <person name="Spiegel L."/>
            <person name="Sekhon M."/>
            <person name="Murray J."/>
            <person name="Sheet P."/>
            <person name="Cordes M."/>
            <person name="Abu-Threideh J."/>
            <person name="Stoneking T."/>
            <person name="Kalicki J."/>
            <person name="Graves T."/>
            <person name="Harmon G."/>
            <person name="Edwards J."/>
            <person name="Latreille P."/>
            <person name="Courtney L."/>
            <person name="Cloud J."/>
            <person name="Abbott A."/>
            <person name="Scott K."/>
            <person name="Johnson D."/>
            <person name="Minx P."/>
            <person name="Bentley D."/>
            <person name="Fulton B."/>
            <person name="Miller N."/>
            <person name="Greco T."/>
            <person name="Kemp K."/>
            <person name="Kramer J."/>
            <person name="Fulton L."/>
            <person name="Mardis E."/>
            <person name="Dante M."/>
            <person name="Pepin K."/>
            <person name="Hillier L.W."/>
            <person name="Nelson J."/>
            <person name="Spieth J."/>
            <person name="Ryan E."/>
            <person name="Andrews S."/>
            <person name="Geisel C."/>
            <person name="Layman D."/>
            <person name="Du H."/>
            <person name="Ali J."/>
            <person name="Berghoff A."/>
            <person name="Jones K."/>
            <person name="Drone K."/>
            <person name="Cotton M."/>
            <person name="Joshu C."/>
            <person name="Antonoiu B."/>
            <person name="Zidanic M."/>
            <person name="Strong C."/>
            <person name="Sun H."/>
            <person name="Lamar B."/>
            <person name="Yordan C."/>
            <person name="Ma P."/>
            <person name="Zhong J."/>
            <person name="Preston R."/>
            <person name="Vil D."/>
            <person name="Shekher M."/>
            <person name="Matero A."/>
            <person name="Shah R."/>
            <person name="Swaby I.K."/>
            <person name="O'Shaughnessy A."/>
            <person name="Rodriguez M."/>
            <person name="Hoffman J."/>
            <person name="Till S."/>
            <person name="Granat S."/>
            <person name="Shohdy N."/>
            <person name="Hasegawa A."/>
            <person name="Hameed A."/>
            <person name="Lodhi M."/>
            <person name="Johnson A."/>
            <person name="Chen E."/>
            <person name="Marra M.A."/>
            <person name="Martienssen R."/>
            <person name="McCombie W.R."/>
        </authorList>
    </citation>
    <scope>NUCLEOTIDE SEQUENCE [LARGE SCALE GENOMIC DNA]</scope>
    <source>
        <strain>cv. Columbia</strain>
    </source>
</reference>
<reference key="4">
    <citation type="journal article" date="2017" name="Plant J.">
        <title>Araport11: a complete reannotation of the Arabidopsis thaliana reference genome.</title>
        <authorList>
            <person name="Cheng C.Y."/>
            <person name="Krishnakumar V."/>
            <person name="Chan A.P."/>
            <person name="Thibaud-Nissen F."/>
            <person name="Schobel S."/>
            <person name="Town C.D."/>
        </authorList>
    </citation>
    <scope>GENOME REANNOTATION</scope>
    <source>
        <strain>cv. Columbia</strain>
    </source>
</reference>
<reference key="5">
    <citation type="submission" date="2006-03" db="EMBL/GenBank/DDBJ databases">
        <title>Arabidopsis ORF clones.</title>
        <authorList>
            <person name="Shinn P."/>
            <person name="Chen H."/>
            <person name="Kim C.J."/>
            <person name="Ecker J.R."/>
        </authorList>
    </citation>
    <scope>NUCLEOTIDE SEQUENCE [LARGE SCALE MRNA]</scope>
    <source>
        <strain>cv. Columbia</strain>
    </source>
</reference>
<reference key="6">
    <citation type="submission" date="1997-05" db="EMBL/GenBank/DDBJ databases">
        <title>One hundred R2R3-MYB genes in the genome of Arabidopsis thaliana.</title>
        <authorList>
            <person name="Romero I."/>
            <person name="Fuertes A."/>
            <person name="Benito M.J."/>
            <person name="Malpica J."/>
            <person name="Leyva A."/>
            <person name="Paz-Ares J."/>
        </authorList>
    </citation>
    <scope>NUCLEOTIDE SEQUENCE [MRNA] OF 55-99</scope>
    <source>
        <strain>cv. Landsberg erecta</strain>
    </source>
</reference>
<reference key="7">
    <citation type="journal article" date="1998" name="Plant J.">
        <title>Towards functional characterisation of the members of the R2R3-MYB gene family from Arabidopsis thaliana.</title>
        <authorList>
            <person name="Kranz H.D."/>
            <person name="Denekamp M."/>
            <person name="Greco R."/>
            <person name="Jin H.-L."/>
            <person name="Leyva A."/>
            <person name="Meissner R.C."/>
            <person name="Petroni K."/>
            <person name="Urzainqui A."/>
            <person name="Bevan M."/>
            <person name="Martin C."/>
            <person name="Smeekens S."/>
            <person name="Tonelli C."/>
            <person name="Paz-Ares J."/>
            <person name="Weisshaar B."/>
        </authorList>
    </citation>
    <scope>NUCLEOTIDE SEQUENCE [MRNA] OF 63-274</scope>
    <scope>TISSUE SPECIFICITY</scope>
    <scope>INDUCTION BY LIGHT; UV; COLD; DROUGHT; ABA AND CYTOKININS</scope>
    <source>
        <strain>cv. Columbia</strain>
    </source>
</reference>
<reference key="8">
    <citation type="journal article" date="2001" name="Curr. Opin. Plant Biol.">
        <title>The R2R3-MYB gene family in Arabidopsis thaliana.</title>
        <authorList>
            <person name="Stracke R."/>
            <person name="Werber M."/>
            <person name="Weisshaar B."/>
        </authorList>
    </citation>
    <scope>GENE FAMILY</scope>
    <scope>NOMENCLATURE</scope>
</reference>
<reference key="9">
    <citation type="journal article" date="2006" name="Plant Mol. Biol.">
        <title>The MYB transcription factor superfamily of Arabidopsis: expression analysis and phylogenetic comparison with the rice MYB family.</title>
        <authorList>
            <person name="Chen Y."/>
            <person name="Yang X."/>
            <person name="He K."/>
            <person name="Liu M."/>
            <person name="Li J."/>
            <person name="Gao Z."/>
            <person name="Lin Z."/>
            <person name="Zhang Y."/>
            <person name="Wang X."/>
            <person name="Qiu X."/>
            <person name="Shen Y."/>
            <person name="Zhang L."/>
            <person name="Deng X."/>
            <person name="Luo J."/>
            <person name="Deng X.-W."/>
            <person name="Chen Z."/>
            <person name="Gu H."/>
            <person name="Qu L.-J."/>
        </authorList>
    </citation>
    <scope>GENE FAMILY</scope>
    <scope>INDUCTION BY ABA; ETHYLENE; JA; SA; CADMIUM AND HIGH SALT</scope>
</reference>
<gene>
    <name type="primary">MYB32</name>
    <name type="ordered locus">At4g34990</name>
    <name type="ORF">M4E13.50</name>
</gene>
<proteinExistence type="evidence at protein level"/>
<protein>
    <recommendedName>
        <fullName>Transcription factor MYB32</fullName>
    </recommendedName>
    <alternativeName>
        <fullName>Myb-related protein 32</fullName>
        <shortName>AtMYB32</shortName>
    </alternativeName>
</protein>
<dbReference type="EMBL" id="U26933">
    <property type="protein sequence ID" value="AAF13100.1"/>
    <property type="molecule type" value="Genomic_DNA"/>
</dbReference>
<dbReference type="EMBL" id="AY519612">
    <property type="protein sequence ID" value="AAS10082.1"/>
    <property type="molecule type" value="mRNA"/>
</dbReference>
<dbReference type="EMBL" id="AL022023">
    <property type="protein sequence ID" value="CAA17764.1"/>
    <property type="molecule type" value="Genomic_DNA"/>
</dbReference>
<dbReference type="EMBL" id="AL161586">
    <property type="protein sequence ID" value="CAB80216.1"/>
    <property type="molecule type" value="Genomic_DNA"/>
</dbReference>
<dbReference type="EMBL" id="CP002687">
    <property type="protein sequence ID" value="AEE86444.1"/>
    <property type="molecule type" value="Genomic_DNA"/>
</dbReference>
<dbReference type="EMBL" id="BT024907">
    <property type="protein sequence ID" value="ABD91498.1"/>
    <property type="molecule type" value="mRNA"/>
</dbReference>
<dbReference type="EMBL" id="Z95756">
    <property type="protein sequence ID" value="CAB09188.1"/>
    <property type="molecule type" value="mRNA"/>
</dbReference>
<dbReference type="EMBL" id="AF062874">
    <property type="protein sequence ID" value="AAC83596.1"/>
    <property type="molecule type" value="mRNA"/>
</dbReference>
<dbReference type="PIR" id="T05769">
    <property type="entry name" value="T05769"/>
</dbReference>
<dbReference type="PIR" id="T51646">
    <property type="entry name" value="T51646"/>
</dbReference>
<dbReference type="RefSeq" id="NP_195225.1">
    <property type="nucleotide sequence ID" value="NM_119665.3"/>
</dbReference>
<dbReference type="SMR" id="O49608"/>
<dbReference type="BioGRID" id="14933">
    <property type="interactions" value="16"/>
</dbReference>
<dbReference type="IntAct" id="O49608">
    <property type="interactions" value="8"/>
</dbReference>
<dbReference type="STRING" id="3702.O49608"/>
<dbReference type="PaxDb" id="3702-AT4G34990.1"/>
<dbReference type="ProteomicsDB" id="251396"/>
<dbReference type="EnsemblPlants" id="AT4G34990.1">
    <property type="protein sequence ID" value="AT4G34990.1"/>
    <property type="gene ID" value="AT4G34990"/>
</dbReference>
<dbReference type="GeneID" id="829651"/>
<dbReference type="Gramene" id="AT4G34990.1">
    <property type="protein sequence ID" value="AT4G34990.1"/>
    <property type="gene ID" value="AT4G34990"/>
</dbReference>
<dbReference type="KEGG" id="ath:AT4G34990"/>
<dbReference type="Araport" id="AT4G34990"/>
<dbReference type="TAIR" id="AT4G34990">
    <property type="gene designation" value="MYB32"/>
</dbReference>
<dbReference type="eggNOG" id="KOG0048">
    <property type="taxonomic scope" value="Eukaryota"/>
</dbReference>
<dbReference type="HOGENOM" id="CLU_028567_23_2_1"/>
<dbReference type="InParanoid" id="O49608"/>
<dbReference type="OMA" id="MCTACRF"/>
<dbReference type="PhylomeDB" id="O49608"/>
<dbReference type="PRO" id="PR:O49608"/>
<dbReference type="Proteomes" id="UP000006548">
    <property type="component" value="Chromosome 4"/>
</dbReference>
<dbReference type="ExpressionAtlas" id="O49608">
    <property type="expression patterns" value="baseline and differential"/>
</dbReference>
<dbReference type="GO" id="GO:0005634">
    <property type="term" value="C:nucleus"/>
    <property type="evidence" value="ECO:0007669"/>
    <property type="project" value="UniProtKB-SubCell"/>
</dbReference>
<dbReference type="GO" id="GO:0003700">
    <property type="term" value="F:DNA-binding transcription factor activity"/>
    <property type="evidence" value="ECO:0000250"/>
    <property type="project" value="TAIR"/>
</dbReference>
<dbReference type="GO" id="GO:0000976">
    <property type="term" value="F:transcription cis-regulatory region binding"/>
    <property type="evidence" value="ECO:0000353"/>
    <property type="project" value="TAIR"/>
</dbReference>
<dbReference type="CDD" id="cd00167">
    <property type="entry name" value="SANT"/>
    <property type="match status" value="2"/>
</dbReference>
<dbReference type="FunFam" id="1.10.10.60:FF:000157">
    <property type="entry name" value="Myb transcription factor"/>
    <property type="match status" value="1"/>
</dbReference>
<dbReference type="FunFam" id="1.10.10.60:FF:000001">
    <property type="entry name" value="MYB-related transcription factor"/>
    <property type="match status" value="1"/>
</dbReference>
<dbReference type="Gene3D" id="1.10.10.60">
    <property type="entry name" value="Homeodomain-like"/>
    <property type="match status" value="2"/>
</dbReference>
<dbReference type="InterPro" id="IPR009057">
    <property type="entry name" value="Homeodomain-like_sf"/>
</dbReference>
<dbReference type="InterPro" id="IPR017930">
    <property type="entry name" value="Myb_dom"/>
</dbReference>
<dbReference type="InterPro" id="IPR015495">
    <property type="entry name" value="Myb_TF_plants"/>
</dbReference>
<dbReference type="InterPro" id="IPR001005">
    <property type="entry name" value="SANT/Myb"/>
</dbReference>
<dbReference type="PANTHER" id="PTHR47994">
    <property type="entry name" value="F14D16.11-RELATED"/>
    <property type="match status" value="1"/>
</dbReference>
<dbReference type="PANTHER" id="PTHR47994:SF5">
    <property type="entry name" value="F14D16.11-RELATED"/>
    <property type="match status" value="1"/>
</dbReference>
<dbReference type="Pfam" id="PF00249">
    <property type="entry name" value="Myb_DNA-binding"/>
    <property type="match status" value="2"/>
</dbReference>
<dbReference type="SMART" id="SM00717">
    <property type="entry name" value="SANT"/>
    <property type="match status" value="2"/>
</dbReference>
<dbReference type="SUPFAM" id="SSF46689">
    <property type="entry name" value="Homeodomain-like"/>
    <property type="match status" value="1"/>
</dbReference>
<dbReference type="PROSITE" id="PS51294">
    <property type="entry name" value="HTH_MYB"/>
    <property type="match status" value="2"/>
</dbReference>
<sequence length="274" mass="31458">MGRSPCCEKDHTNKGAWTKEEDDKLISYIKAHGEGCWRSLPRSAGLQRCGKSCRLRWINYLRPDLKRGNFTLEEDDLIIKLHSLLGNKWSLIATRLPGRTDNEIKNYWNTHVKRKLLRKGIDPATHRPINETKTSQDSSDSSKTEDPLVKILSFGPQLEKIANFGDERIQKRVEYSVVEERCLDLNLELRISPPWQDKLHDERNLRFGRVKYRCSACRFGFGNGKECSCNNVKCQTEDSSSSSYSSTDISSSIGYDFLGLNNTRVLDFSTLEMK</sequence>
<name>MYB32_ARATH</name>
<organism>
    <name type="scientific">Arabidopsis thaliana</name>
    <name type="common">Mouse-ear cress</name>
    <dbReference type="NCBI Taxonomy" id="3702"/>
    <lineage>
        <taxon>Eukaryota</taxon>
        <taxon>Viridiplantae</taxon>
        <taxon>Streptophyta</taxon>
        <taxon>Embryophyta</taxon>
        <taxon>Tracheophyta</taxon>
        <taxon>Spermatophyta</taxon>
        <taxon>Magnoliopsida</taxon>
        <taxon>eudicotyledons</taxon>
        <taxon>Gunneridae</taxon>
        <taxon>Pentapetalae</taxon>
        <taxon>rosids</taxon>
        <taxon>malvids</taxon>
        <taxon>Brassicales</taxon>
        <taxon>Brassicaceae</taxon>
        <taxon>Camelineae</taxon>
        <taxon>Arabidopsis</taxon>
    </lineage>
</organism>
<evidence type="ECO:0000255" key="1">
    <source>
        <dbReference type="PROSITE-ProRule" id="PRU00625"/>
    </source>
</evidence>
<evidence type="ECO:0000256" key="2">
    <source>
        <dbReference type="SAM" id="MobiDB-lite"/>
    </source>
</evidence>
<evidence type="ECO:0000269" key="3">
    <source>
    </source>
</evidence>
<evidence type="ECO:0000269" key="4">
    <source>
    </source>
</evidence>
<evidence type="ECO:0000305" key="5"/>
<comment type="interaction">
    <interactant intactId="EBI-15200192">
        <id>O49608</id>
    </interactant>
    <interactant intactId="EBI-25523114">
        <id>Q9LND0</id>
        <label>BHLH89</label>
    </interactant>
    <organismsDiffer>false</organismsDiffer>
    <experiments>3</experiments>
</comment>
<comment type="subcellular location">
    <subcellularLocation>
        <location evidence="1">Nucleus</location>
    </subcellularLocation>
</comment>
<comment type="tissue specificity">
    <text evidence="4">Mostly expressed in roots, and, to a lower extent, in stems, flower buds, and siliques.</text>
</comment>
<comment type="induction">
    <text evidence="3 4">By light, UV, cold, drought, ethylene, jasmonic acid (JA), salicylic acid (SA), abscisic acid (ABA), cadmium (CdCl(2)), high salt (NaCl), and cytokinins.</text>
</comment>
<feature type="chain" id="PRO_0000358833" description="Transcription factor MYB32">
    <location>
        <begin position="1"/>
        <end position="274"/>
    </location>
</feature>
<feature type="domain" description="HTH myb-type 1" evidence="1">
    <location>
        <begin position="9"/>
        <end position="61"/>
    </location>
</feature>
<feature type="domain" description="HTH myb-type 2" evidence="1">
    <location>
        <begin position="62"/>
        <end position="116"/>
    </location>
</feature>
<feature type="DNA-binding region" description="H-T-H motif" evidence="1">
    <location>
        <begin position="37"/>
        <end position="61"/>
    </location>
</feature>
<feature type="DNA-binding region" description="H-T-H motif" evidence="1">
    <location>
        <begin position="89"/>
        <end position="112"/>
    </location>
</feature>
<feature type="region of interest" description="Disordered" evidence="2">
    <location>
        <begin position="123"/>
        <end position="144"/>
    </location>
</feature>
<feature type="sequence conflict" description="In Ref. 7; AAC83596." evidence="5" ref="7">
    <original>D</original>
    <variation>V</variation>
    <location>
        <position position="140"/>
    </location>
</feature>
<feature type="sequence conflict" description="In Ref. 1; AAF13100." evidence="5" ref="1">
    <original>L</original>
    <variation>F</variation>
    <location>
        <position position="199"/>
    </location>
</feature>
<feature type="sequence conflict" description="In Ref. 1; AAF13100." evidence="5" ref="1">
    <original>Y</original>
    <variation>H</variation>
    <location>
        <position position="212"/>
    </location>
</feature>
<keyword id="KW-0238">DNA-binding</keyword>
<keyword id="KW-0539">Nucleus</keyword>
<keyword id="KW-1185">Reference proteome</keyword>
<keyword id="KW-0677">Repeat</keyword>
<keyword id="KW-0804">Transcription</keyword>
<keyword id="KW-0805">Transcription regulation</keyword>